<sequence>MFLNKKYPSLIEKKMDDLMTLKFCYLIITFLIITNIFSLAINIWGGGDMIDRQSCENIFYCPKDWVGYNNACYYFSNNNKNYTDANNYCKNSHNSTLANNDTKLLNLTKLLNLSKLYYNDSTYWVKYSLPKNKAVTLRNSTYKYDRVKYTETFFICSN</sequence>
<accession>P0CA63</accession>
<keyword id="KW-1015">Disulfide bond</keyword>
<keyword id="KW-0244">Early protein</keyword>
<keyword id="KW-0325">Glycoprotein</keyword>
<keyword id="KW-1038">Host endoplasmic reticulum</keyword>
<keyword id="KW-1043">Host membrane</keyword>
<keyword id="KW-0945">Host-virus interaction</keyword>
<keyword id="KW-0430">Lectin</keyword>
<keyword id="KW-0472">Membrane</keyword>
<keyword id="KW-1119">Modulation of host cell apoptosis by virus</keyword>
<keyword id="KW-0735">Signal-anchor</keyword>
<keyword id="KW-0812">Transmembrane</keyword>
<keyword id="KW-1133">Transmembrane helix</keyword>
<reference key="1">
    <citation type="submission" date="2003-03" db="EMBL/GenBank/DDBJ databases">
        <title>African swine fever virus genomes.</title>
        <authorList>
            <person name="Kutish G.F."/>
            <person name="Rock D.L."/>
        </authorList>
    </citation>
    <scope>NUCLEOTIDE SEQUENCE [LARGE SCALE GENOMIC DNA]</scope>
</reference>
<comment type="function">
    <text evidence="1 2">Down-regulates MHC-I expression by impairing the appropriate configuration or presentation into the plasma membrane of the latter (By similarity). Participates in viral hemadsorption, which may help viral spread (By similarity). Reduces the transactivating activity of host TP53, thus inhibiting apoptosis (By similarity). Non-essential for virus growth in swine macrophage cell cultures (By similarity).</text>
</comment>
<comment type="subunit">
    <text evidence="2">Homodimer.</text>
</comment>
<comment type="subcellular location">
    <subcellularLocation>
        <location evidence="2">Host endoplasmic reticulum membrane</location>
        <topology evidence="2">Single-pass type II membrane protein</topology>
    </subcellularLocation>
</comment>
<comment type="induction">
    <text evidence="2">Expressed in the early phase of the viral replicative cycle. Expressed in the late phase of the viral replicative cycle.</text>
</comment>
<comment type="similarity">
    <text evidence="4">Belongs to the asfivirus lectin-like protein family.</text>
</comment>
<feature type="chain" id="PRO_0000373539" description="Lectin-like protein EP153R">
    <location>
        <begin position="1"/>
        <end position="158"/>
    </location>
</feature>
<feature type="topological domain" description="Cytoplasmic" evidence="2">
    <location>
        <begin position="1"/>
        <end position="26"/>
    </location>
</feature>
<feature type="transmembrane region" description="Helical" evidence="3">
    <location>
        <begin position="27"/>
        <end position="47"/>
    </location>
</feature>
<feature type="topological domain" description="Extracellular" evidence="2">
    <location>
        <begin position="48"/>
        <end position="158"/>
    </location>
</feature>
<feature type="region of interest" description="Lectin-like">
    <location>
        <begin position="61"/>
        <end position="157"/>
    </location>
</feature>
<feature type="glycosylation site" description="N-linked (GlcNAc...) asparagine; by host" evidence="3">
    <location>
        <position position="81"/>
    </location>
</feature>
<feature type="glycosylation site" description="N-linked (GlcNAc...) asparagine; by host" evidence="3">
    <location>
        <position position="94"/>
    </location>
</feature>
<feature type="glycosylation site" description="N-linked (GlcNAc...) asparagine; by host" evidence="3">
    <location>
        <position position="100"/>
    </location>
</feature>
<feature type="glycosylation site" description="N-linked (GlcNAc...) asparagine; by host" evidence="3">
    <location>
        <position position="106"/>
    </location>
</feature>
<feature type="glycosylation site" description="N-linked (GlcNAc...) asparagine; by host" evidence="3">
    <location>
        <position position="112"/>
    </location>
</feature>
<feature type="glycosylation site" description="N-linked (GlcNAc...) asparagine; by host" evidence="3">
    <location>
        <position position="119"/>
    </location>
</feature>
<feature type="glycosylation site" description="N-linked (GlcNAc...) asparagine; by host" evidence="3">
    <location>
        <position position="139"/>
    </location>
</feature>
<feature type="disulfide bond" evidence="2">
    <location>
        <begin position="61"/>
        <end position="72"/>
    </location>
</feature>
<protein>
    <recommendedName>
        <fullName>Lectin-like protein EP153R</fullName>
        <shortName>pEP153R</shortName>
    </recommendedName>
</protein>
<organism>
    <name type="scientific">African swine fever virus (isolate Pig/Kenya/KEN-50/1950)</name>
    <name type="common">ASFV</name>
    <dbReference type="NCBI Taxonomy" id="561445"/>
    <lineage>
        <taxon>Viruses</taxon>
        <taxon>Varidnaviria</taxon>
        <taxon>Bamfordvirae</taxon>
        <taxon>Nucleocytoviricota</taxon>
        <taxon>Pokkesviricetes</taxon>
        <taxon>Asfuvirales</taxon>
        <taxon>Asfarviridae</taxon>
        <taxon>Asfivirus</taxon>
        <taxon>African swine fever virus</taxon>
    </lineage>
</organism>
<organismHost>
    <name type="scientific">Ornithodoros</name>
    <name type="common">relapsing fever ticks</name>
    <dbReference type="NCBI Taxonomy" id="6937"/>
</organismHost>
<organismHost>
    <name type="scientific">Phacochoerus aethiopicus</name>
    <name type="common">Warthog</name>
    <dbReference type="NCBI Taxonomy" id="85517"/>
</organismHost>
<organismHost>
    <name type="scientific">Phacochoerus africanus</name>
    <name type="common">Warthog</name>
    <dbReference type="NCBI Taxonomy" id="41426"/>
</organismHost>
<organismHost>
    <name type="scientific">Potamochoerus larvatus</name>
    <name type="common">Bushpig</name>
    <dbReference type="NCBI Taxonomy" id="273792"/>
</organismHost>
<organismHost>
    <name type="scientific">Sus scrofa</name>
    <name type="common">Pig</name>
    <dbReference type="NCBI Taxonomy" id="9823"/>
</organismHost>
<evidence type="ECO:0000250" key="1">
    <source>
        <dbReference type="UniProtKB" id="P0CA64"/>
    </source>
</evidence>
<evidence type="ECO:0000250" key="2">
    <source>
        <dbReference type="UniProtKB" id="Q65150"/>
    </source>
</evidence>
<evidence type="ECO:0000255" key="3"/>
<evidence type="ECO:0000305" key="4"/>
<gene>
    <name type="ordered locus">Ken-069</name>
</gene>
<dbReference type="EMBL" id="AY261360">
    <property type="status" value="NOT_ANNOTATED_CDS"/>
    <property type="molecule type" value="Genomic_DNA"/>
</dbReference>
<dbReference type="SMR" id="P0CA63"/>
<dbReference type="Proteomes" id="UP000000861">
    <property type="component" value="Segment"/>
</dbReference>
<dbReference type="GO" id="GO:0044167">
    <property type="term" value="C:host cell endoplasmic reticulum membrane"/>
    <property type="evidence" value="ECO:0007669"/>
    <property type="project" value="UniProtKB-SubCell"/>
</dbReference>
<dbReference type="GO" id="GO:0016020">
    <property type="term" value="C:membrane"/>
    <property type="evidence" value="ECO:0007669"/>
    <property type="project" value="UniProtKB-KW"/>
</dbReference>
<dbReference type="GO" id="GO:0030246">
    <property type="term" value="F:carbohydrate binding"/>
    <property type="evidence" value="ECO:0007669"/>
    <property type="project" value="UniProtKB-KW"/>
</dbReference>
<dbReference type="GO" id="GO:0052150">
    <property type="term" value="P:symbiont-mediated perturbation of host apoptosis"/>
    <property type="evidence" value="ECO:0007669"/>
    <property type="project" value="UniProtKB-KW"/>
</dbReference>
<dbReference type="Gene3D" id="3.10.100.10">
    <property type="entry name" value="Mannose-Binding Protein A, subunit A"/>
    <property type="match status" value="1"/>
</dbReference>
<dbReference type="InterPro" id="IPR016186">
    <property type="entry name" value="C-type_lectin-like/link_sf"/>
</dbReference>
<dbReference type="InterPro" id="IPR050828">
    <property type="entry name" value="C-type_lectin/matrix_domain"/>
</dbReference>
<dbReference type="InterPro" id="IPR016187">
    <property type="entry name" value="CTDL_fold"/>
</dbReference>
<dbReference type="PANTHER" id="PTHR45710">
    <property type="entry name" value="C-TYPE LECTIN DOMAIN-CONTAINING PROTEIN 180"/>
    <property type="match status" value="1"/>
</dbReference>
<dbReference type="PANTHER" id="PTHR45710:SF26">
    <property type="entry name" value="RH26557P"/>
    <property type="match status" value="1"/>
</dbReference>
<dbReference type="Pfam" id="PF05473">
    <property type="entry name" value="UL45"/>
    <property type="match status" value="1"/>
</dbReference>
<dbReference type="SUPFAM" id="SSF56436">
    <property type="entry name" value="C-type lectin-like"/>
    <property type="match status" value="1"/>
</dbReference>
<name>EP153_ASFK5</name>
<proteinExistence type="inferred from homology"/>